<feature type="chain" id="PRO_0000207931" description="Protein PsbN">
    <location>
        <begin position="1"/>
        <end position="43"/>
    </location>
</feature>
<feature type="transmembrane region" description="Helical" evidence="1">
    <location>
        <begin position="4"/>
        <end position="24"/>
    </location>
</feature>
<protein>
    <recommendedName>
        <fullName evidence="1">Protein PsbN</fullName>
    </recommendedName>
</protein>
<organism>
    <name type="scientific">Trieres chinensis</name>
    <name type="common">Marine centric diatom</name>
    <name type="synonym">Odontella sinensis</name>
    <dbReference type="NCBI Taxonomy" id="1514140"/>
    <lineage>
        <taxon>Eukaryota</taxon>
        <taxon>Sar</taxon>
        <taxon>Stramenopiles</taxon>
        <taxon>Ochrophyta</taxon>
        <taxon>Bacillariophyta</taxon>
        <taxon>Mediophyceae</taxon>
        <taxon>Biddulphiophycidae</taxon>
        <taxon>Eupodiscales</taxon>
        <taxon>Parodontellaceae</taxon>
        <taxon>Trieres</taxon>
    </lineage>
</organism>
<accession>P49515</accession>
<dbReference type="EMBL" id="Z67753">
    <property type="protein sequence ID" value="CAA91697.1"/>
    <property type="molecule type" value="Genomic_DNA"/>
</dbReference>
<dbReference type="PIR" id="S78324">
    <property type="entry name" value="S78324"/>
</dbReference>
<dbReference type="RefSeq" id="NP_043665.1">
    <property type="nucleotide sequence ID" value="NC_001713.1"/>
</dbReference>
<dbReference type="SMR" id="P49515"/>
<dbReference type="GeneID" id="801748"/>
<dbReference type="GO" id="GO:0009535">
    <property type="term" value="C:chloroplast thylakoid membrane"/>
    <property type="evidence" value="ECO:0007669"/>
    <property type="project" value="UniProtKB-SubCell"/>
</dbReference>
<dbReference type="GO" id="GO:0015979">
    <property type="term" value="P:photosynthesis"/>
    <property type="evidence" value="ECO:0007669"/>
    <property type="project" value="InterPro"/>
</dbReference>
<dbReference type="HAMAP" id="MF_00293">
    <property type="entry name" value="PSII_PsbN"/>
    <property type="match status" value="1"/>
</dbReference>
<dbReference type="InterPro" id="IPR003398">
    <property type="entry name" value="PSII_PsbN"/>
</dbReference>
<dbReference type="PANTHER" id="PTHR35326">
    <property type="entry name" value="PROTEIN PSBN"/>
    <property type="match status" value="1"/>
</dbReference>
<dbReference type="PANTHER" id="PTHR35326:SF3">
    <property type="entry name" value="PROTEIN PSBN"/>
    <property type="match status" value="1"/>
</dbReference>
<dbReference type="Pfam" id="PF02468">
    <property type="entry name" value="PsbN"/>
    <property type="match status" value="1"/>
</dbReference>
<name>PSBN_TRICV</name>
<gene>
    <name evidence="1" type="primary">psbN</name>
</gene>
<keyword id="KW-0150">Chloroplast</keyword>
<keyword id="KW-0472">Membrane</keyword>
<keyword id="KW-0934">Plastid</keyword>
<keyword id="KW-0793">Thylakoid</keyword>
<keyword id="KW-0812">Transmembrane</keyword>
<keyword id="KW-1133">Transmembrane helix</keyword>
<reference key="1">
    <citation type="journal article" date="1995" name="Plant Mol. Biol. Rep.">
        <title>The chloroplast genome of a chlorophyll a+c-containing alga, Odontella sinensis.</title>
        <authorList>
            <person name="Kowallik K.V."/>
            <person name="Stoebe B."/>
            <person name="Schaffran I."/>
            <person name="Kroth-Pancic P."/>
            <person name="Freier U."/>
        </authorList>
    </citation>
    <scope>NUCLEOTIDE SEQUENCE [LARGE SCALE GENOMIC DNA]</scope>
</reference>
<comment type="function">
    <text evidence="1">May play a role in photosystem I and II biogenesis.</text>
</comment>
<comment type="subcellular location">
    <subcellularLocation>
        <location evidence="1">Plastid</location>
        <location evidence="1">Chloroplast thylakoid membrane</location>
        <topology evidence="1">Single-pass membrane protein</topology>
    </subcellularLocation>
</comment>
<comment type="similarity">
    <text evidence="1">Belongs to the PsbN family.</text>
</comment>
<comment type="caution">
    <text evidence="1">Originally thought to be a component of PSII; based on experiments in Synechocystis, N.tabacum and barley, and its absence from PSII in T.elongatus and T.vulcanus, this is probably not true.</text>
</comment>
<geneLocation type="chloroplast"/>
<evidence type="ECO:0000255" key="1">
    <source>
        <dbReference type="HAMAP-Rule" id="MF_00293"/>
    </source>
</evidence>
<sequence length="43" mass="4745">METATIIVIFVSSLLLGITAYSIYTAFGPAAKNLRDPFEEHED</sequence>
<proteinExistence type="inferred from homology"/>